<name>Y510_ARCFU</name>
<comment type="subcellular location">
    <subcellularLocation>
        <location evidence="2">Cell membrane</location>
        <topology evidence="2">Multi-pass membrane protein</topology>
    </subcellularLocation>
</comment>
<comment type="similarity">
    <text evidence="2">Belongs to the EamA transporter family.</text>
</comment>
<organism>
    <name type="scientific">Archaeoglobus fulgidus (strain ATCC 49558 / DSM 4304 / JCM 9628 / NBRC 100126 / VC-16)</name>
    <dbReference type="NCBI Taxonomy" id="224325"/>
    <lineage>
        <taxon>Archaea</taxon>
        <taxon>Methanobacteriati</taxon>
        <taxon>Methanobacteriota</taxon>
        <taxon>Archaeoglobi</taxon>
        <taxon>Archaeoglobales</taxon>
        <taxon>Archaeoglobaceae</taxon>
        <taxon>Archaeoglobus</taxon>
    </lineage>
</organism>
<proteinExistence type="inferred from homology"/>
<dbReference type="EMBL" id="AE000782">
    <property type="protein sequence ID" value="AAB90720.1"/>
    <property type="molecule type" value="Genomic_DNA"/>
</dbReference>
<dbReference type="PIR" id="F69313">
    <property type="entry name" value="F69313"/>
</dbReference>
<dbReference type="RefSeq" id="WP_010878017.1">
    <property type="nucleotide sequence ID" value="NC_000917.1"/>
</dbReference>
<dbReference type="SMR" id="O29740"/>
<dbReference type="STRING" id="224325.AF_0510"/>
<dbReference type="TCDB" id="2.A.7.3.36">
    <property type="family name" value="the drug/metabolite transporter (dmt) superfamily"/>
</dbReference>
<dbReference type="PaxDb" id="224325-AF_0510"/>
<dbReference type="EnsemblBacteria" id="AAB90720">
    <property type="protein sequence ID" value="AAB90720"/>
    <property type="gene ID" value="AF_0510"/>
</dbReference>
<dbReference type="KEGG" id="afu:AF_0510"/>
<dbReference type="eggNOG" id="arCOG00271">
    <property type="taxonomic scope" value="Archaea"/>
</dbReference>
<dbReference type="HOGENOM" id="CLU_033863_21_3_2"/>
<dbReference type="OrthoDB" id="50325at2157"/>
<dbReference type="PhylomeDB" id="O29740"/>
<dbReference type="Proteomes" id="UP000002199">
    <property type="component" value="Chromosome"/>
</dbReference>
<dbReference type="GO" id="GO:0005886">
    <property type="term" value="C:plasma membrane"/>
    <property type="evidence" value="ECO:0007669"/>
    <property type="project" value="UniProtKB-SubCell"/>
</dbReference>
<dbReference type="InterPro" id="IPR050638">
    <property type="entry name" value="AA-Vitamin_Transporters"/>
</dbReference>
<dbReference type="InterPro" id="IPR000620">
    <property type="entry name" value="EamA_dom"/>
</dbReference>
<dbReference type="PANTHER" id="PTHR32322:SF2">
    <property type="entry name" value="EAMA DOMAIN-CONTAINING PROTEIN"/>
    <property type="match status" value="1"/>
</dbReference>
<dbReference type="PANTHER" id="PTHR32322">
    <property type="entry name" value="INNER MEMBRANE TRANSPORTER"/>
    <property type="match status" value="1"/>
</dbReference>
<dbReference type="Pfam" id="PF00892">
    <property type="entry name" value="EamA"/>
    <property type="match status" value="2"/>
</dbReference>
<dbReference type="SUPFAM" id="SSF103481">
    <property type="entry name" value="Multidrug resistance efflux transporter EmrE"/>
    <property type="match status" value="2"/>
</dbReference>
<gene>
    <name type="ordered locus">AF_0510</name>
</gene>
<sequence>MNSKTHLLLALTMLIWAGSFIFIKIGLKELDPFNLAFYRFLLASPLLMAWVFWKRGLAKPSGSEWLHLSVLALSGVTLLYAFQFLALKYTTATNASILINTSAVFVALWGLVKGEANPRKLAGVFLSFAGVVLIVSKGTLEFFSSKTIFGDVLMIVDGFLWAVYTVLGSKMLLKYDHETLTAYAFALGTIFLIPFALMSGFANPVTFNPETVAALLYLSILCSVFAYVVWYYALTNADSTSVAVYVYLVPLFTAIFAFYALNEKPDFFTAIGGIITIAGVYLTTAKQHQ</sequence>
<reference key="1">
    <citation type="journal article" date="1997" name="Nature">
        <title>The complete genome sequence of the hyperthermophilic, sulphate-reducing archaeon Archaeoglobus fulgidus.</title>
        <authorList>
            <person name="Klenk H.-P."/>
            <person name="Clayton R.A."/>
            <person name="Tomb J.-F."/>
            <person name="White O."/>
            <person name="Nelson K.E."/>
            <person name="Ketchum K.A."/>
            <person name="Dodson R.J."/>
            <person name="Gwinn M.L."/>
            <person name="Hickey E.K."/>
            <person name="Peterson J.D."/>
            <person name="Richardson D.L."/>
            <person name="Kerlavage A.R."/>
            <person name="Graham D.E."/>
            <person name="Kyrpides N.C."/>
            <person name="Fleischmann R.D."/>
            <person name="Quackenbush J."/>
            <person name="Lee N.H."/>
            <person name="Sutton G.G."/>
            <person name="Gill S.R."/>
            <person name="Kirkness E.F."/>
            <person name="Dougherty B.A."/>
            <person name="McKenney K."/>
            <person name="Adams M.D."/>
            <person name="Loftus B.J."/>
            <person name="Peterson S.N."/>
            <person name="Reich C.I."/>
            <person name="McNeil L.K."/>
            <person name="Badger J.H."/>
            <person name="Glodek A."/>
            <person name="Zhou L."/>
            <person name="Overbeek R."/>
            <person name="Gocayne J.D."/>
            <person name="Weidman J.F."/>
            <person name="McDonald L.A."/>
            <person name="Utterback T.R."/>
            <person name="Cotton M.D."/>
            <person name="Spriggs T."/>
            <person name="Artiach P."/>
            <person name="Kaine B.P."/>
            <person name="Sykes S.M."/>
            <person name="Sadow P.W."/>
            <person name="D'Andrea K.P."/>
            <person name="Bowman C."/>
            <person name="Fujii C."/>
            <person name="Garland S.A."/>
            <person name="Mason T.M."/>
            <person name="Olsen G.J."/>
            <person name="Fraser C.M."/>
            <person name="Smith H.O."/>
            <person name="Woese C.R."/>
            <person name="Venter J.C."/>
        </authorList>
    </citation>
    <scope>NUCLEOTIDE SEQUENCE [LARGE SCALE GENOMIC DNA]</scope>
    <source>
        <strain>ATCC 49558 / DSM 4304 / JCM 9628 / NBRC 100126 / VC-16</strain>
    </source>
</reference>
<keyword id="KW-1003">Cell membrane</keyword>
<keyword id="KW-0472">Membrane</keyword>
<keyword id="KW-1185">Reference proteome</keyword>
<keyword id="KW-0677">Repeat</keyword>
<keyword id="KW-0812">Transmembrane</keyword>
<keyword id="KW-1133">Transmembrane helix</keyword>
<keyword id="KW-0813">Transport</keyword>
<feature type="chain" id="PRO_0000108202" description="Uncharacterized transporter AF_0510">
    <location>
        <begin position="1"/>
        <end position="289"/>
    </location>
</feature>
<feature type="transmembrane region" description="Helical" evidence="1">
    <location>
        <begin position="7"/>
        <end position="27"/>
    </location>
</feature>
<feature type="transmembrane region" description="Helical" evidence="1">
    <location>
        <begin position="33"/>
        <end position="53"/>
    </location>
</feature>
<feature type="transmembrane region" description="Helical" evidence="1">
    <location>
        <begin position="65"/>
        <end position="85"/>
    </location>
</feature>
<feature type="transmembrane region" description="Helical" evidence="1">
    <location>
        <begin position="92"/>
        <end position="112"/>
    </location>
</feature>
<feature type="transmembrane region" description="Helical" evidence="1">
    <location>
        <begin position="123"/>
        <end position="143"/>
    </location>
</feature>
<feature type="transmembrane region" description="Helical" evidence="1">
    <location>
        <begin position="148"/>
        <end position="168"/>
    </location>
</feature>
<feature type="transmembrane region" description="Helical" evidence="1">
    <location>
        <begin position="182"/>
        <end position="202"/>
    </location>
</feature>
<feature type="transmembrane region" description="Helical" evidence="1">
    <location>
        <begin position="212"/>
        <end position="232"/>
    </location>
</feature>
<feature type="transmembrane region" description="Helical" evidence="1">
    <location>
        <begin position="241"/>
        <end position="261"/>
    </location>
</feature>
<feature type="transmembrane region" description="Helical" evidence="1">
    <location>
        <begin position="265"/>
        <end position="285"/>
    </location>
</feature>
<feature type="domain" description="EamA 1">
    <location>
        <begin position="14"/>
        <end position="136"/>
    </location>
</feature>
<feature type="domain" description="EamA 2">
    <location>
        <begin position="159"/>
        <end position="285"/>
    </location>
</feature>
<evidence type="ECO:0000255" key="1"/>
<evidence type="ECO:0000305" key="2"/>
<accession>O29740</accession>
<protein>
    <recommendedName>
        <fullName>Uncharacterized transporter AF_0510</fullName>
    </recommendedName>
</protein>